<organism>
    <name type="scientific">Vibrio vulnificus (strain YJ016)</name>
    <dbReference type="NCBI Taxonomy" id="196600"/>
    <lineage>
        <taxon>Bacteria</taxon>
        <taxon>Pseudomonadati</taxon>
        <taxon>Pseudomonadota</taxon>
        <taxon>Gammaproteobacteria</taxon>
        <taxon>Vibrionales</taxon>
        <taxon>Vibrionaceae</taxon>
        <taxon>Vibrio</taxon>
    </lineage>
</organism>
<gene>
    <name evidence="1" type="primary">frr</name>
    <name type="ordered locus">VV2554</name>
</gene>
<sequence>MINDIKKDAQERMEKSVEALKNSLSKVRTGRAHPSLLSGISVDYYGAATPLTQVANVIAEDARTLAITVFDKELTQKVEKAIMMSDLGLNPMSAGTVIRVPLPPLTEERRKDLVKIVRGEAEGGRVAVRNIRRDANSDLKALLKEKEISEDEDRKAQDEIQKLTDAAVKKIDDVLAAKEKELMEV</sequence>
<feature type="chain" id="PRO_0000167577" description="Ribosome-recycling factor">
    <location>
        <begin position="1"/>
        <end position="185"/>
    </location>
</feature>
<keyword id="KW-0963">Cytoplasm</keyword>
<keyword id="KW-0648">Protein biosynthesis</keyword>
<accession>Q7MIG3</accession>
<comment type="function">
    <text evidence="1">Responsible for the release of ribosomes from messenger RNA at the termination of protein biosynthesis. May increase the efficiency of translation by recycling ribosomes from one round of translation to another.</text>
</comment>
<comment type="subcellular location">
    <subcellularLocation>
        <location evidence="1">Cytoplasm</location>
    </subcellularLocation>
</comment>
<comment type="similarity">
    <text evidence="1">Belongs to the RRF family.</text>
</comment>
<proteinExistence type="inferred from homology"/>
<protein>
    <recommendedName>
        <fullName evidence="1">Ribosome-recycling factor</fullName>
        <shortName evidence="1">RRF</shortName>
    </recommendedName>
    <alternativeName>
        <fullName evidence="1">Ribosome-releasing factor</fullName>
    </alternativeName>
</protein>
<evidence type="ECO:0000255" key="1">
    <source>
        <dbReference type="HAMAP-Rule" id="MF_00040"/>
    </source>
</evidence>
<name>RRF_VIBVY</name>
<reference key="1">
    <citation type="journal article" date="2003" name="Genome Res.">
        <title>Comparative genome analysis of Vibrio vulnificus, a marine pathogen.</title>
        <authorList>
            <person name="Chen C.-Y."/>
            <person name="Wu K.-M."/>
            <person name="Chang Y.-C."/>
            <person name="Chang C.-H."/>
            <person name="Tsai H.-C."/>
            <person name="Liao T.-L."/>
            <person name="Liu Y.-M."/>
            <person name="Chen H.-J."/>
            <person name="Shen A.B.-T."/>
            <person name="Li J.-C."/>
            <person name="Su T.-L."/>
            <person name="Shao C.-P."/>
            <person name="Lee C.-T."/>
            <person name="Hor L.-I."/>
            <person name="Tsai S.-F."/>
        </authorList>
    </citation>
    <scope>NUCLEOTIDE SEQUENCE [LARGE SCALE GENOMIC DNA]</scope>
    <source>
        <strain>YJ016</strain>
    </source>
</reference>
<dbReference type="EMBL" id="BA000037">
    <property type="protein sequence ID" value="BAC95318.1"/>
    <property type="molecule type" value="Genomic_DNA"/>
</dbReference>
<dbReference type="RefSeq" id="WP_011150962.1">
    <property type="nucleotide sequence ID" value="NC_005139.1"/>
</dbReference>
<dbReference type="SMR" id="Q7MIG3"/>
<dbReference type="STRING" id="672.VV93_v1c22730"/>
<dbReference type="GeneID" id="93896090"/>
<dbReference type="KEGG" id="vvy:VV2554"/>
<dbReference type="eggNOG" id="COG0233">
    <property type="taxonomic scope" value="Bacteria"/>
</dbReference>
<dbReference type="HOGENOM" id="CLU_073981_2_1_6"/>
<dbReference type="Proteomes" id="UP000002675">
    <property type="component" value="Chromosome I"/>
</dbReference>
<dbReference type="GO" id="GO:0005829">
    <property type="term" value="C:cytosol"/>
    <property type="evidence" value="ECO:0007669"/>
    <property type="project" value="GOC"/>
</dbReference>
<dbReference type="GO" id="GO:0043023">
    <property type="term" value="F:ribosomal large subunit binding"/>
    <property type="evidence" value="ECO:0007669"/>
    <property type="project" value="TreeGrafter"/>
</dbReference>
<dbReference type="GO" id="GO:0002184">
    <property type="term" value="P:cytoplasmic translational termination"/>
    <property type="evidence" value="ECO:0007669"/>
    <property type="project" value="TreeGrafter"/>
</dbReference>
<dbReference type="CDD" id="cd00520">
    <property type="entry name" value="RRF"/>
    <property type="match status" value="1"/>
</dbReference>
<dbReference type="FunFam" id="1.10.132.20:FF:000001">
    <property type="entry name" value="Ribosome-recycling factor"/>
    <property type="match status" value="1"/>
</dbReference>
<dbReference type="FunFam" id="3.30.1360.40:FF:000001">
    <property type="entry name" value="Ribosome-recycling factor"/>
    <property type="match status" value="1"/>
</dbReference>
<dbReference type="Gene3D" id="3.30.1360.40">
    <property type="match status" value="1"/>
</dbReference>
<dbReference type="Gene3D" id="1.10.132.20">
    <property type="entry name" value="Ribosome-recycling factor"/>
    <property type="match status" value="1"/>
</dbReference>
<dbReference type="HAMAP" id="MF_00040">
    <property type="entry name" value="RRF"/>
    <property type="match status" value="1"/>
</dbReference>
<dbReference type="InterPro" id="IPR002661">
    <property type="entry name" value="Ribosome_recyc_fac"/>
</dbReference>
<dbReference type="InterPro" id="IPR023584">
    <property type="entry name" value="Ribosome_recyc_fac_dom"/>
</dbReference>
<dbReference type="InterPro" id="IPR036191">
    <property type="entry name" value="RRF_sf"/>
</dbReference>
<dbReference type="NCBIfam" id="TIGR00496">
    <property type="entry name" value="frr"/>
    <property type="match status" value="1"/>
</dbReference>
<dbReference type="PANTHER" id="PTHR20982:SF3">
    <property type="entry name" value="MITOCHONDRIAL RIBOSOME RECYCLING FACTOR PSEUDO 1"/>
    <property type="match status" value="1"/>
</dbReference>
<dbReference type="PANTHER" id="PTHR20982">
    <property type="entry name" value="RIBOSOME RECYCLING FACTOR"/>
    <property type="match status" value="1"/>
</dbReference>
<dbReference type="Pfam" id="PF01765">
    <property type="entry name" value="RRF"/>
    <property type="match status" value="1"/>
</dbReference>
<dbReference type="SUPFAM" id="SSF55194">
    <property type="entry name" value="Ribosome recycling factor, RRF"/>
    <property type="match status" value="1"/>
</dbReference>